<dbReference type="EC" id="6.3.5.-" evidence="1"/>
<dbReference type="EMBL" id="CP000764">
    <property type="protein sequence ID" value="ABS20660.1"/>
    <property type="molecule type" value="Genomic_DNA"/>
</dbReference>
<dbReference type="RefSeq" id="WP_011983418.1">
    <property type="nucleotide sequence ID" value="NC_009674.1"/>
</dbReference>
<dbReference type="SMR" id="A7GKK2"/>
<dbReference type="STRING" id="315749.Bcer98_0297"/>
<dbReference type="GeneID" id="33895651"/>
<dbReference type="KEGG" id="bcy:Bcer98_0297"/>
<dbReference type="eggNOG" id="COG0721">
    <property type="taxonomic scope" value="Bacteria"/>
</dbReference>
<dbReference type="HOGENOM" id="CLU_105899_6_1_9"/>
<dbReference type="OrthoDB" id="9813938at2"/>
<dbReference type="Proteomes" id="UP000002300">
    <property type="component" value="Chromosome"/>
</dbReference>
<dbReference type="GO" id="GO:0050566">
    <property type="term" value="F:asparaginyl-tRNA synthase (glutamine-hydrolyzing) activity"/>
    <property type="evidence" value="ECO:0007669"/>
    <property type="project" value="RHEA"/>
</dbReference>
<dbReference type="GO" id="GO:0005524">
    <property type="term" value="F:ATP binding"/>
    <property type="evidence" value="ECO:0007669"/>
    <property type="project" value="UniProtKB-KW"/>
</dbReference>
<dbReference type="GO" id="GO:0050567">
    <property type="term" value="F:glutaminyl-tRNA synthase (glutamine-hydrolyzing) activity"/>
    <property type="evidence" value="ECO:0007669"/>
    <property type="project" value="UniProtKB-UniRule"/>
</dbReference>
<dbReference type="GO" id="GO:0070681">
    <property type="term" value="P:glutaminyl-tRNAGln biosynthesis via transamidation"/>
    <property type="evidence" value="ECO:0007669"/>
    <property type="project" value="TreeGrafter"/>
</dbReference>
<dbReference type="GO" id="GO:0006450">
    <property type="term" value="P:regulation of translational fidelity"/>
    <property type="evidence" value="ECO:0007669"/>
    <property type="project" value="InterPro"/>
</dbReference>
<dbReference type="GO" id="GO:0006412">
    <property type="term" value="P:translation"/>
    <property type="evidence" value="ECO:0007669"/>
    <property type="project" value="UniProtKB-UniRule"/>
</dbReference>
<dbReference type="Gene3D" id="1.10.20.60">
    <property type="entry name" value="Glu-tRNAGln amidotransferase C subunit, N-terminal domain"/>
    <property type="match status" value="1"/>
</dbReference>
<dbReference type="HAMAP" id="MF_00122">
    <property type="entry name" value="GatC"/>
    <property type="match status" value="1"/>
</dbReference>
<dbReference type="InterPro" id="IPR036113">
    <property type="entry name" value="Asp/Glu-ADT_sf_sub_c"/>
</dbReference>
<dbReference type="InterPro" id="IPR003837">
    <property type="entry name" value="GatC"/>
</dbReference>
<dbReference type="NCBIfam" id="TIGR00135">
    <property type="entry name" value="gatC"/>
    <property type="match status" value="1"/>
</dbReference>
<dbReference type="PANTHER" id="PTHR15004">
    <property type="entry name" value="GLUTAMYL-TRNA(GLN) AMIDOTRANSFERASE SUBUNIT C, MITOCHONDRIAL"/>
    <property type="match status" value="1"/>
</dbReference>
<dbReference type="PANTHER" id="PTHR15004:SF0">
    <property type="entry name" value="GLUTAMYL-TRNA(GLN) AMIDOTRANSFERASE SUBUNIT C, MITOCHONDRIAL"/>
    <property type="match status" value="1"/>
</dbReference>
<dbReference type="Pfam" id="PF02686">
    <property type="entry name" value="GatC"/>
    <property type="match status" value="1"/>
</dbReference>
<dbReference type="SUPFAM" id="SSF141000">
    <property type="entry name" value="Glu-tRNAGln amidotransferase C subunit"/>
    <property type="match status" value="1"/>
</dbReference>
<reference key="1">
    <citation type="journal article" date="2008" name="Chem. Biol. Interact.">
        <title>Extending the Bacillus cereus group genomics to putative food-borne pathogens of different toxicity.</title>
        <authorList>
            <person name="Lapidus A."/>
            <person name="Goltsman E."/>
            <person name="Auger S."/>
            <person name="Galleron N."/>
            <person name="Segurens B."/>
            <person name="Dossat C."/>
            <person name="Land M.L."/>
            <person name="Broussolle V."/>
            <person name="Brillard J."/>
            <person name="Guinebretiere M.-H."/>
            <person name="Sanchis V."/>
            <person name="Nguen-the C."/>
            <person name="Lereclus D."/>
            <person name="Richardson P."/>
            <person name="Wincker P."/>
            <person name="Weissenbach J."/>
            <person name="Ehrlich S.D."/>
            <person name="Sorokin A."/>
        </authorList>
    </citation>
    <scope>NUCLEOTIDE SEQUENCE [LARGE SCALE GENOMIC DNA]</scope>
    <source>
        <strain>DSM 22905 / CIP 110041 / 391-98 / NVH 391-98</strain>
    </source>
</reference>
<name>GATC_BACCN</name>
<evidence type="ECO:0000255" key="1">
    <source>
        <dbReference type="HAMAP-Rule" id="MF_00122"/>
    </source>
</evidence>
<accession>A7GKK2</accession>
<protein>
    <recommendedName>
        <fullName evidence="1">Aspartyl/glutamyl-tRNA(Asn/Gln) amidotransferase subunit C</fullName>
        <shortName evidence="1">Asp/Glu-ADT subunit C</shortName>
        <ecNumber evidence="1">6.3.5.-</ecNumber>
    </recommendedName>
</protein>
<gene>
    <name evidence="1" type="primary">gatC</name>
    <name type="ordered locus">Bcer98_0297</name>
</gene>
<sequence length="96" mass="10907">MSRISVENVKHVAHLARLAITDQEAEKFQKQLDAIVTFAEQLNELDTTNVKPTTHVLTMRNVMREDVPEQGLPVEEVLKNAPDHKENQIRVPAVLE</sequence>
<organism>
    <name type="scientific">Bacillus cytotoxicus (strain DSM 22905 / CIP 110041 / 391-98 / NVH 391-98)</name>
    <dbReference type="NCBI Taxonomy" id="315749"/>
    <lineage>
        <taxon>Bacteria</taxon>
        <taxon>Bacillati</taxon>
        <taxon>Bacillota</taxon>
        <taxon>Bacilli</taxon>
        <taxon>Bacillales</taxon>
        <taxon>Bacillaceae</taxon>
        <taxon>Bacillus</taxon>
        <taxon>Bacillus cereus group</taxon>
    </lineage>
</organism>
<proteinExistence type="inferred from homology"/>
<feature type="chain" id="PRO_1000076175" description="Aspartyl/glutamyl-tRNA(Asn/Gln) amidotransferase subunit C">
    <location>
        <begin position="1"/>
        <end position="96"/>
    </location>
</feature>
<keyword id="KW-0067">ATP-binding</keyword>
<keyword id="KW-0436">Ligase</keyword>
<keyword id="KW-0547">Nucleotide-binding</keyword>
<keyword id="KW-0648">Protein biosynthesis</keyword>
<comment type="function">
    <text evidence="1">Allows the formation of correctly charged Asn-tRNA(Asn) or Gln-tRNA(Gln) through the transamidation of misacylated Asp-tRNA(Asn) or Glu-tRNA(Gln) in organisms which lack either or both of asparaginyl-tRNA or glutaminyl-tRNA synthetases. The reaction takes place in the presence of glutamine and ATP through an activated phospho-Asp-tRNA(Asn) or phospho-Glu-tRNA(Gln).</text>
</comment>
<comment type="catalytic activity">
    <reaction evidence="1">
        <text>L-glutamyl-tRNA(Gln) + L-glutamine + ATP + H2O = L-glutaminyl-tRNA(Gln) + L-glutamate + ADP + phosphate + H(+)</text>
        <dbReference type="Rhea" id="RHEA:17521"/>
        <dbReference type="Rhea" id="RHEA-COMP:9681"/>
        <dbReference type="Rhea" id="RHEA-COMP:9684"/>
        <dbReference type="ChEBI" id="CHEBI:15377"/>
        <dbReference type="ChEBI" id="CHEBI:15378"/>
        <dbReference type="ChEBI" id="CHEBI:29985"/>
        <dbReference type="ChEBI" id="CHEBI:30616"/>
        <dbReference type="ChEBI" id="CHEBI:43474"/>
        <dbReference type="ChEBI" id="CHEBI:58359"/>
        <dbReference type="ChEBI" id="CHEBI:78520"/>
        <dbReference type="ChEBI" id="CHEBI:78521"/>
        <dbReference type="ChEBI" id="CHEBI:456216"/>
    </reaction>
</comment>
<comment type="catalytic activity">
    <reaction evidence="1">
        <text>L-aspartyl-tRNA(Asn) + L-glutamine + ATP + H2O = L-asparaginyl-tRNA(Asn) + L-glutamate + ADP + phosphate + 2 H(+)</text>
        <dbReference type="Rhea" id="RHEA:14513"/>
        <dbReference type="Rhea" id="RHEA-COMP:9674"/>
        <dbReference type="Rhea" id="RHEA-COMP:9677"/>
        <dbReference type="ChEBI" id="CHEBI:15377"/>
        <dbReference type="ChEBI" id="CHEBI:15378"/>
        <dbReference type="ChEBI" id="CHEBI:29985"/>
        <dbReference type="ChEBI" id="CHEBI:30616"/>
        <dbReference type="ChEBI" id="CHEBI:43474"/>
        <dbReference type="ChEBI" id="CHEBI:58359"/>
        <dbReference type="ChEBI" id="CHEBI:78515"/>
        <dbReference type="ChEBI" id="CHEBI:78516"/>
        <dbReference type="ChEBI" id="CHEBI:456216"/>
    </reaction>
</comment>
<comment type="subunit">
    <text evidence="1">Heterotrimer of A, B and C subunits.</text>
</comment>
<comment type="similarity">
    <text evidence="1">Belongs to the GatC family.</text>
</comment>